<accession>Q9KC85</accession>
<name>PAND_HALH5</name>
<reference key="1">
    <citation type="journal article" date="2000" name="Nucleic Acids Res.">
        <title>Complete genome sequence of the alkaliphilic bacterium Bacillus halodurans and genomic sequence comparison with Bacillus subtilis.</title>
        <authorList>
            <person name="Takami H."/>
            <person name="Nakasone K."/>
            <person name="Takaki Y."/>
            <person name="Maeno G."/>
            <person name="Sasaki R."/>
            <person name="Masui N."/>
            <person name="Fuji F."/>
            <person name="Hirama C."/>
            <person name="Nakamura Y."/>
            <person name="Ogasawara N."/>
            <person name="Kuhara S."/>
            <person name="Horikoshi K."/>
        </authorList>
    </citation>
    <scope>NUCLEOTIDE SEQUENCE [LARGE SCALE GENOMIC DNA]</scope>
    <source>
        <strain>ATCC BAA-125 / DSM 18197 / FERM 7344 / JCM 9153 / C-125</strain>
    </source>
</reference>
<sequence length="127" mass="13962">MFRTMMKAKLHRARVTESNLNYVGSITIDEDIMDAVDIVENEKVQIVNNNNGARFETYVIKGPRGSGVFCLNGAAARLVQEGDVIIVISYALVAEENVKEHQPKVAVLNESNQIVEMLGTEPASTVL</sequence>
<gene>
    <name evidence="1" type="primary">panD</name>
    <name type="ordered locus">BH1689</name>
</gene>
<evidence type="ECO:0000255" key="1">
    <source>
        <dbReference type="HAMAP-Rule" id="MF_00446"/>
    </source>
</evidence>
<comment type="function">
    <text evidence="1">Catalyzes the pyruvoyl-dependent decarboxylation of aspartate to produce beta-alanine.</text>
</comment>
<comment type="catalytic activity">
    <reaction evidence="1">
        <text>L-aspartate + H(+) = beta-alanine + CO2</text>
        <dbReference type="Rhea" id="RHEA:19497"/>
        <dbReference type="ChEBI" id="CHEBI:15378"/>
        <dbReference type="ChEBI" id="CHEBI:16526"/>
        <dbReference type="ChEBI" id="CHEBI:29991"/>
        <dbReference type="ChEBI" id="CHEBI:57966"/>
        <dbReference type="EC" id="4.1.1.11"/>
    </reaction>
</comment>
<comment type="cofactor">
    <cofactor evidence="1">
        <name>pyruvate</name>
        <dbReference type="ChEBI" id="CHEBI:15361"/>
    </cofactor>
    <text evidence="1">Binds 1 pyruvoyl group covalently per subunit.</text>
</comment>
<comment type="pathway">
    <text evidence="1">Cofactor biosynthesis; (R)-pantothenate biosynthesis; beta-alanine from L-aspartate: step 1/1.</text>
</comment>
<comment type="subunit">
    <text evidence="1">Heterooctamer of four alpha and four beta subunits.</text>
</comment>
<comment type="subcellular location">
    <subcellularLocation>
        <location evidence="1">Cytoplasm</location>
    </subcellularLocation>
</comment>
<comment type="PTM">
    <text evidence="1">Is synthesized initially as an inactive proenzyme, which is activated by self-cleavage at a specific serine bond to produce a beta-subunit with a hydroxyl group at its C-terminus and an alpha-subunit with a pyruvoyl group at its N-terminus.</text>
</comment>
<comment type="similarity">
    <text evidence="1">Belongs to the PanD family.</text>
</comment>
<organism>
    <name type="scientific">Halalkalibacterium halodurans (strain ATCC BAA-125 / DSM 18197 / FERM 7344 / JCM 9153 / C-125)</name>
    <name type="common">Bacillus halodurans</name>
    <dbReference type="NCBI Taxonomy" id="272558"/>
    <lineage>
        <taxon>Bacteria</taxon>
        <taxon>Bacillati</taxon>
        <taxon>Bacillota</taxon>
        <taxon>Bacilli</taxon>
        <taxon>Bacillales</taxon>
        <taxon>Bacillaceae</taxon>
        <taxon>Halalkalibacterium (ex Joshi et al. 2022)</taxon>
    </lineage>
</organism>
<dbReference type="EC" id="4.1.1.11" evidence="1"/>
<dbReference type="EMBL" id="BA000004">
    <property type="protein sequence ID" value="BAB05408.1"/>
    <property type="molecule type" value="Genomic_DNA"/>
</dbReference>
<dbReference type="PIR" id="A83861">
    <property type="entry name" value="A83861"/>
</dbReference>
<dbReference type="RefSeq" id="WP_010897850.1">
    <property type="nucleotide sequence ID" value="NC_002570.2"/>
</dbReference>
<dbReference type="SMR" id="Q9KC85"/>
<dbReference type="STRING" id="272558.gene:10727587"/>
<dbReference type="GeneID" id="87597306"/>
<dbReference type="KEGG" id="bha:BH1689"/>
<dbReference type="eggNOG" id="COG0853">
    <property type="taxonomic scope" value="Bacteria"/>
</dbReference>
<dbReference type="HOGENOM" id="CLU_115305_2_0_9"/>
<dbReference type="OrthoDB" id="9803983at2"/>
<dbReference type="UniPathway" id="UPA00028">
    <property type="reaction ID" value="UER00002"/>
</dbReference>
<dbReference type="Proteomes" id="UP000001258">
    <property type="component" value="Chromosome"/>
</dbReference>
<dbReference type="GO" id="GO:0005829">
    <property type="term" value="C:cytosol"/>
    <property type="evidence" value="ECO:0007669"/>
    <property type="project" value="TreeGrafter"/>
</dbReference>
<dbReference type="GO" id="GO:0004068">
    <property type="term" value="F:aspartate 1-decarboxylase activity"/>
    <property type="evidence" value="ECO:0007669"/>
    <property type="project" value="UniProtKB-UniRule"/>
</dbReference>
<dbReference type="GO" id="GO:0006523">
    <property type="term" value="P:alanine biosynthetic process"/>
    <property type="evidence" value="ECO:0007669"/>
    <property type="project" value="InterPro"/>
</dbReference>
<dbReference type="GO" id="GO:0015940">
    <property type="term" value="P:pantothenate biosynthetic process"/>
    <property type="evidence" value="ECO:0007669"/>
    <property type="project" value="UniProtKB-UniRule"/>
</dbReference>
<dbReference type="CDD" id="cd06919">
    <property type="entry name" value="Asp_decarbox"/>
    <property type="match status" value="1"/>
</dbReference>
<dbReference type="Gene3D" id="2.40.40.20">
    <property type="match status" value="1"/>
</dbReference>
<dbReference type="HAMAP" id="MF_00446">
    <property type="entry name" value="PanD"/>
    <property type="match status" value="1"/>
</dbReference>
<dbReference type="InterPro" id="IPR009010">
    <property type="entry name" value="Asp_de-COase-like_dom_sf"/>
</dbReference>
<dbReference type="InterPro" id="IPR003190">
    <property type="entry name" value="Asp_decarbox"/>
</dbReference>
<dbReference type="NCBIfam" id="TIGR00223">
    <property type="entry name" value="panD"/>
    <property type="match status" value="1"/>
</dbReference>
<dbReference type="PANTHER" id="PTHR21012">
    <property type="entry name" value="ASPARTATE 1-DECARBOXYLASE"/>
    <property type="match status" value="1"/>
</dbReference>
<dbReference type="PANTHER" id="PTHR21012:SF0">
    <property type="entry name" value="ASPARTATE 1-DECARBOXYLASE"/>
    <property type="match status" value="1"/>
</dbReference>
<dbReference type="Pfam" id="PF02261">
    <property type="entry name" value="Asp_decarbox"/>
    <property type="match status" value="1"/>
</dbReference>
<dbReference type="PIRSF" id="PIRSF006246">
    <property type="entry name" value="Asp_decarbox"/>
    <property type="match status" value="1"/>
</dbReference>
<dbReference type="SUPFAM" id="SSF50692">
    <property type="entry name" value="ADC-like"/>
    <property type="match status" value="1"/>
</dbReference>
<protein>
    <recommendedName>
        <fullName evidence="1">Aspartate 1-decarboxylase</fullName>
        <ecNumber evidence="1">4.1.1.11</ecNumber>
    </recommendedName>
    <alternativeName>
        <fullName evidence="1">Aspartate alpha-decarboxylase</fullName>
    </alternativeName>
    <component>
        <recommendedName>
            <fullName evidence="1">Aspartate 1-decarboxylase beta chain</fullName>
        </recommendedName>
    </component>
    <component>
        <recommendedName>
            <fullName evidence="1">Aspartate 1-decarboxylase alpha chain</fullName>
        </recommendedName>
    </component>
</protein>
<proteinExistence type="inferred from homology"/>
<feature type="chain" id="PRO_0000023027" description="Aspartate 1-decarboxylase beta chain" evidence="1">
    <location>
        <begin position="1"/>
        <end position="24"/>
    </location>
</feature>
<feature type="chain" id="PRO_0000023028" description="Aspartate 1-decarboxylase alpha chain" evidence="1">
    <location>
        <begin position="25"/>
        <end position="127"/>
    </location>
</feature>
<feature type="active site" description="Schiff-base intermediate with substrate; via pyruvic acid" evidence="1">
    <location>
        <position position="25"/>
    </location>
</feature>
<feature type="active site" description="Proton donor" evidence="1">
    <location>
        <position position="58"/>
    </location>
</feature>
<feature type="binding site" evidence="1">
    <location>
        <position position="57"/>
    </location>
    <ligand>
        <name>substrate</name>
    </ligand>
</feature>
<feature type="binding site" evidence="1">
    <location>
        <begin position="73"/>
        <end position="75"/>
    </location>
    <ligand>
        <name>substrate</name>
    </ligand>
</feature>
<feature type="modified residue" description="Pyruvic acid (Ser)" evidence="1">
    <location>
        <position position="25"/>
    </location>
</feature>
<keyword id="KW-0068">Autocatalytic cleavage</keyword>
<keyword id="KW-0963">Cytoplasm</keyword>
<keyword id="KW-0210">Decarboxylase</keyword>
<keyword id="KW-0456">Lyase</keyword>
<keyword id="KW-0566">Pantothenate biosynthesis</keyword>
<keyword id="KW-0670">Pyruvate</keyword>
<keyword id="KW-1185">Reference proteome</keyword>
<keyword id="KW-0704">Schiff base</keyword>
<keyword id="KW-0865">Zymogen</keyword>